<reference key="1">
    <citation type="journal article" date="2009" name="BMC Genomics">
        <title>Metabolic analysis of the soil microbe Dechloromonas aromatica str. RCB: indications of a surprisingly complex life-style and cryptic anaerobic pathways for aromatic degradation.</title>
        <authorList>
            <person name="Salinero K.K."/>
            <person name="Keller K."/>
            <person name="Feil W.S."/>
            <person name="Feil H."/>
            <person name="Trong S."/>
            <person name="Di Bartolo G."/>
            <person name="Lapidus A."/>
        </authorList>
    </citation>
    <scope>NUCLEOTIDE SEQUENCE [LARGE SCALE GENOMIC DNA]</scope>
    <source>
        <strain>RCB</strain>
    </source>
</reference>
<dbReference type="EMBL" id="CP000089">
    <property type="protein sequence ID" value="AAZ45406.1"/>
    <property type="molecule type" value="Genomic_DNA"/>
</dbReference>
<dbReference type="SMR" id="Q47IC5"/>
<dbReference type="STRING" id="159087.Daro_0649"/>
<dbReference type="KEGG" id="dar:Daro_0649"/>
<dbReference type="eggNOG" id="COG0102">
    <property type="taxonomic scope" value="Bacteria"/>
</dbReference>
<dbReference type="HOGENOM" id="CLU_082184_2_2_4"/>
<dbReference type="OrthoDB" id="9801330at2"/>
<dbReference type="GO" id="GO:0022625">
    <property type="term" value="C:cytosolic large ribosomal subunit"/>
    <property type="evidence" value="ECO:0007669"/>
    <property type="project" value="TreeGrafter"/>
</dbReference>
<dbReference type="GO" id="GO:0003729">
    <property type="term" value="F:mRNA binding"/>
    <property type="evidence" value="ECO:0007669"/>
    <property type="project" value="TreeGrafter"/>
</dbReference>
<dbReference type="GO" id="GO:0003735">
    <property type="term" value="F:structural constituent of ribosome"/>
    <property type="evidence" value="ECO:0007669"/>
    <property type="project" value="InterPro"/>
</dbReference>
<dbReference type="GO" id="GO:0017148">
    <property type="term" value="P:negative regulation of translation"/>
    <property type="evidence" value="ECO:0007669"/>
    <property type="project" value="TreeGrafter"/>
</dbReference>
<dbReference type="GO" id="GO:0006412">
    <property type="term" value="P:translation"/>
    <property type="evidence" value="ECO:0007669"/>
    <property type="project" value="UniProtKB-UniRule"/>
</dbReference>
<dbReference type="CDD" id="cd00392">
    <property type="entry name" value="Ribosomal_L13"/>
    <property type="match status" value="1"/>
</dbReference>
<dbReference type="FunFam" id="3.90.1180.10:FF:000001">
    <property type="entry name" value="50S ribosomal protein L13"/>
    <property type="match status" value="1"/>
</dbReference>
<dbReference type="Gene3D" id="3.90.1180.10">
    <property type="entry name" value="Ribosomal protein L13"/>
    <property type="match status" value="1"/>
</dbReference>
<dbReference type="HAMAP" id="MF_01366">
    <property type="entry name" value="Ribosomal_uL13"/>
    <property type="match status" value="1"/>
</dbReference>
<dbReference type="InterPro" id="IPR005822">
    <property type="entry name" value="Ribosomal_uL13"/>
</dbReference>
<dbReference type="InterPro" id="IPR005823">
    <property type="entry name" value="Ribosomal_uL13_bac-type"/>
</dbReference>
<dbReference type="InterPro" id="IPR036899">
    <property type="entry name" value="Ribosomal_uL13_sf"/>
</dbReference>
<dbReference type="NCBIfam" id="TIGR01066">
    <property type="entry name" value="rplM_bact"/>
    <property type="match status" value="1"/>
</dbReference>
<dbReference type="PANTHER" id="PTHR11545:SF2">
    <property type="entry name" value="LARGE RIBOSOMAL SUBUNIT PROTEIN UL13M"/>
    <property type="match status" value="1"/>
</dbReference>
<dbReference type="PANTHER" id="PTHR11545">
    <property type="entry name" value="RIBOSOMAL PROTEIN L13"/>
    <property type="match status" value="1"/>
</dbReference>
<dbReference type="Pfam" id="PF00572">
    <property type="entry name" value="Ribosomal_L13"/>
    <property type="match status" value="1"/>
</dbReference>
<dbReference type="PIRSF" id="PIRSF002181">
    <property type="entry name" value="Ribosomal_L13"/>
    <property type="match status" value="1"/>
</dbReference>
<dbReference type="SUPFAM" id="SSF52161">
    <property type="entry name" value="Ribosomal protein L13"/>
    <property type="match status" value="1"/>
</dbReference>
<feature type="chain" id="PRO_0000261718" description="Large ribosomal subunit protein uL13">
    <location>
        <begin position="1"/>
        <end position="142"/>
    </location>
</feature>
<evidence type="ECO:0000255" key="1">
    <source>
        <dbReference type="HAMAP-Rule" id="MF_01366"/>
    </source>
</evidence>
<evidence type="ECO:0000305" key="2"/>
<comment type="function">
    <text evidence="1">This protein is one of the early assembly proteins of the 50S ribosomal subunit, although it is not seen to bind rRNA by itself. It is important during the early stages of 50S assembly.</text>
</comment>
<comment type="subunit">
    <text evidence="1">Part of the 50S ribosomal subunit.</text>
</comment>
<comment type="similarity">
    <text evidence="1">Belongs to the universal ribosomal protein uL13 family.</text>
</comment>
<name>RL13_DECAR</name>
<proteinExistence type="inferred from homology"/>
<organism>
    <name type="scientific">Dechloromonas aromatica (strain RCB)</name>
    <dbReference type="NCBI Taxonomy" id="159087"/>
    <lineage>
        <taxon>Bacteria</taxon>
        <taxon>Pseudomonadati</taxon>
        <taxon>Pseudomonadota</taxon>
        <taxon>Betaproteobacteria</taxon>
        <taxon>Rhodocyclales</taxon>
        <taxon>Azonexaceae</taxon>
        <taxon>Dechloromonas</taxon>
    </lineage>
</organism>
<keyword id="KW-0687">Ribonucleoprotein</keyword>
<keyword id="KW-0689">Ribosomal protein</keyword>
<sequence length="142" mass="16070">MKTFSAKPHEVKREWFVVDATDKVLGRLATEIARRLRGKHKAIYTPHIDTGDFVVVTNVDKITVTGNKAEDKKYFRHSGYPGGIYETNFKKMQQRFPGRALETAVKGMLPKGPLGYAMLKKLKCYAGEQHPHTAQQPKALEI</sequence>
<gene>
    <name evidence="1" type="primary">rplM</name>
    <name type="ordered locus">Daro_0649</name>
</gene>
<protein>
    <recommendedName>
        <fullName evidence="1">Large ribosomal subunit protein uL13</fullName>
    </recommendedName>
    <alternativeName>
        <fullName evidence="2">50S ribosomal protein L13</fullName>
    </alternativeName>
</protein>
<accession>Q47IC5</accession>